<feature type="chain" id="PRO_0000217491" description="Uncharacterized 15.7 kDa protein in rpl14-rpl12 intergenic region">
    <location>
        <begin position="1"/>
        <end position="125"/>
    </location>
</feature>
<protein>
    <recommendedName>
        <fullName>Uncharacterized 15.7 kDa protein in rpl14-rpl12 intergenic region</fullName>
    </recommendedName>
    <alternativeName>
        <fullName>ORF125b</fullName>
    </alternativeName>
</protein>
<proteinExistence type="predicted"/>
<accession>P58146</accession>
<geneLocation type="non-photosynthetic plastid"/>
<sequence>MKKRRGPSEDENPRPEKLFTQKVFDYISRVILKYFKKTYKFIIYILKNLTLFKILYKCFPYIKNFILKIDKIFFHVLIKSINFIKYIPQLIHDKIFEFFWFILKIFQILIFVKIFKYVIKKFIIY</sequence>
<organism>
    <name type="scientific">Euglena longa</name>
    <name type="common">Euglenophycean alga</name>
    <name type="synonym">Astasia longa</name>
    <dbReference type="NCBI Taxonomy" id="3037"/>
    <lineage>
        <taxon>Eukaryota</taxon>
        <taxon>Discoba</taxon>
        <taxon>Euglenozoa</taxon>
        <taxon>Euglenida</taxon>
        <taxon>Spirocuta</taxon>
        <taxon>Euglenophyceae</taxon>
        <taxon>Euglenales</taxon>
        <taxon>Euglenaceae</taxon>
        <taxon>Euglena</taxon>
    </lineage>
</organism>
<name>YCX8_EUGLO</name>
<dbReference type="EMBL" id="AJ294725">
    <property type="protein sequence ID" value="CAC24602.1"/>
    <property type="molecule type" value="Genomic_DNA"/>
</dbReference>
<dbReference type="RefSeq" id="NP_074991.1">
    <property type="nucleotide sequence ID" value="NC_002652.1"/>
</dbReference>
<dbReference type="SMR" id="P58146"/>
<dbReference type="GeneID" id="1457315"/>
<dbReference type="GO" id="GO:0009536">
    <property type="term" value="C:plastid"/>
    <property type="evidence" value="ECO:0007669"/>
    <property type="project" value="UniProtKB-SubCell"/>
</dbReference>
<keyword id="KW-0934">Plastid</keyword>
<comment type="subcellular location">
    <subcellularLocation>
        <location>Plastid</location>
    </subcellularLocation>
</comment>
<reference key="1">
    <citation type="journal article" date="2000" name="Protist">
        <title>Complete gene map of the plastid genome of the nonphotosynthetic euglenoid flagellate Astasia longa.</title>
        <authorList>
            <person name="Gockel G."/>
            <person name="Hachtel W."/>
        </authorList>
    </citation>
    <scope>NUCLEOTIDE SEQUENCE [LARGE SCALE GENOMIC DNA]</scope>
    <source>
        <strain>CCAP 1204-17a</strain>
    </source>
</reference>